<accession>A1AMW9</accession>
<reference key="1">
    <citation type="submission" date="2006-10" db="EMBL/GenBank/DDBJ databases">
        <title>Complete sequence of chromosome of Pelobacter propionicus DSM 2379.</title>
        <authorList>
            <consortium name="US DOE Joint Genome Institute"/>
            <person name="Copeland A."/>
            <person name="Lucas S."/>
            <person name="Lapidus A."/>
            <person name="Barry K."/>
            <person name="Detter J.C."/>
            <person name="Glavina del Rio T."/>
            <person name="Hammon N."/>
            <person name="Israni S."/>
            <person name="Dalin E."/>
            <person name="Tice H."/>
            <person name="Pitluck S."/>
            <person name="Saunders E."/>
            <person name="Brettin T."/>
            <person name="Bruce D."/>
            <person name="Han C."/>
            <person name="Tapia R."/>
            <person name="Schmutz J."/>
            <person name="Larimer F."/>
            <person name="Land M."/>
            <person name="Hauser L."/>
            <person name="Kyrpides N."/>
            <person name="Kim E."/>
            <person name="Lovley D."/>
            <person name="Richardson P."/>
        </authorList>
    </citation>
    <scope>NUCLEOTIDE SEQUENCE [LARGE SCALE GENOMIC DNA]</scope>
    <source>
        <strain>DSM 2379 / NBRC 103807 / OttBd1</strain>
    </source>
</reference>
<protein>
    <recommendedName>
        <fullName evidence="1">DNA mismatch repair protein MutS</fullName>
    </recommendedName>
</protein>
<dbReference type="EMBL" id="CP000482">
    <property type="protein sequence ID" value="ABK98689.1"/>
    <property type="molecule type" value="Genomic_DNA"/>
</dbReference>
<dbReference type="RefSeq" id="WP_011734993.1">
    <property type="nucleotide sequence ID" value="NC_008609.1"/>
</dbReference>
<dbReference type="SMR" id="A1AMW9"/>
<dbReference type="STRING" id="338966.Ppro_1064"/>
<dbReference type="KEGG" id="ppd:Ppro_1064"/>
<dbReference type="eggNOG" id="COG0249">
    <property type="taxonomic scope" value="Bacteria"/>
</dbReference>
<dbReference type="HOGENOM" id="CLU_002472_3_1_7"/>
<dbReference type="OrthoDB" id="9802448at2"/>
<dbReference type="Proteomes" id="UP000006732">
    <property type="component" value="Chromosome"/>
</dbReference>
<dbReference type="GO" id="GO:0005829">
    <property type="term" value="C:cytosol"/>
    <property type="evidence" value="ECO:0007669"/>
    <property type="project" value="TreeGrafter"/>
</dbReference>
<dbReference type="GO" id="GO:0005524">
    <property type="term" value="F:ATP binding"/>
    <property type="evidence" value="ECO:0007669"/>
    <property type="project" value="UniProtKB-UniRule"/>
</dbReference>
<dbReference type="GO" id="GO:0140664">
    <property type="term" value="F:ATP-dependent DNA damage sensor activity"/>
    <property type="evidence" value="ECO:0007669"/>
    <property type="project" value="InterPro"/>
</dbReference>
<dbReference type="GO" id="GO:0003684">
    <property type="term" value="F:damaged DNA binding"/>
    <property type="evidence" value="ECO:0007669"/>
    <property type="project" value="UniProtKB-UniRule"/>
</dbReference>
<dbReference type="GO" id="GO:0030983">
    <property type="term" value="F:mismatched DNA binding"/>
    <property type="evidence" value="ECO:0007669"/>
    <property type="project" value="InterPro"/>
</dbReference>
<dbReference type="GO" id="GO:0006298">
    <property type="term" value="P:mismatch repair"/>
    <property type="evidence" value="ECO:0007669"/>
    <property type="project" value="UniProtKB-UniRule"/>
</dbReference>
<dbReference type="CDD" id="cd03284">
    <property type="entry name" value="ABC_MutS1"/>
    <property type="match status" value="1"/>
</dbReference>
<dbReference type="FunFam" id="1.10.1420.10:FF:000001">
    <property type="entry name" value="DNA mismatch repair protein MutS"/>
    <property type="match status" value="1"/>
</dbReference>
<dbReference type="FunFam" id="3.40.1170.10:FF:000001">
    <property type="entry name" value="DNA mismatch repair protein MutS"/>
    <property type="match status" value="1"/>
</dbReference>
<dbReference type="FunFam" id="3.40.50.300:FF:000870">
    <property type="entry name" value="MutS protein homolog 4"/>
    <property type="match status" value="1"/>
</dbReference>
<dbReference type="Gene3D" id="1.10.1420.10">
    <property type="match status" value="2"/>
</dbReference>
<dbReference type="Gene3D" id="3.40.1170.10">
    <property type="entry name" value="DNA repair protein MutS, domain I"/>
    <property type="match status" value="1"/>
</dbReference>
<dbReference type="Gene3D" id="3.30.420.110">
    <property type="entry name" value="MutS, connector domain"/>
    <property type="match status" value="1"/>
</dbReference>
<dbReference type="Gene3D" id="3.40.50.300">
    <property type="entry name" value="P-loop containing nucleotide triphosphate hydrolases"/>
    <property type="match status" value="1"/>
</dbReference>
<dbReference type="HAMAP" id="MF_00096">
    <property type="entry name" value="MutS"/>
    <property type="match status" value="1"/>
</dbReference>
<dbReference type="InterPro" id="IPR005748">
    <property type="entry name" value="DNA_mismatch_repair_MutS"/>
</dbReference>
<dbReference type="InterPro" id="IPR007695">
    <property type="entry name" value="DNA_mismatch_repair_MutS-lik_N"/>
</dbReference>
<dbReference type="InterPro" id="IPR017261">
    <property type="entry name" value="DNA_mismatch_repair_MutS/MSH"/>
</dbReference>
<dbReference type="InterPro" id="IPR000432">
    <property type="entry name" value="DNA_mismatch_repair_MutS_C"/>
</dbReference>
<dbReference type="InterPro" id="IPR007861">
    <property type="entry name" value="DNA_mismatch_repair_MutS_clamp"/>
</dbReference>
<dbReference type="InterPro" id="IPR007696">
    <property type="entry name" value="DNA_mismatch_repair_MutS_core"/>
</dbReference>
<dbReference type="InterPro" id="IPR016151">
    <property type="entry name" value="DNA_mismatch_repair_MutS_N"/>
</dbReference>
<dbReference type="InterPro" id="IPR036187">
    <property type="entry name" value="DNA_mismatch_repair_MutS_sf"/>
</dbReference>
<dbReference type="InterPro" id="IPR007860">
    <property type="entry name" value="DNA_mmatch_repair_MutS_con_dom"/>
</dbReference>
<dbReference type="InterPro" id="IPR045076">
    <property type="entry name" value="MutS"/>
</dbReference>
<dbReference type="InterPro" id="IPR036678">
    <property type="entry name" value="MutS_con_dom_sf"/>
</dbReference>
<dbReference type="InterPro" id="IPR027417">
    <property type="entry name" value="P-loop_NTPase"/>
</dbReference>
<dbReference type="NCBIfam" id="TIGR01070">
    <property type="entry name" value="mutS1"/>
    <property type="match status" value="1"/>
</dbReference>
<dbReference type="NCBIfam" id="NF003810">
    <property type="entry name" value="PRK05399.1"/>
    <property type="match status" value="1"/>
</dbReference>
<dbReference type="PANTHER" id="PTHR11361:SF34">
    <property type="entry name" value="DNA MISMATCH REPAIR PROTEIN MSH1, MITOCHONDRIAL"/>
    <property type="match status" value="1"/>
</dbReference>
<dbReference type="PANTHER" id="PTHR11361">
    <property type="entry name" value="DNA MISMATCH REPAIR PROTEIN MUTS FAMILY MEMBER"/>
    <property type="match status" value="1"/>
</dbReference>
<dbReference type="Pfam" id="PF01624">
    <property type="entry name" value="MutS_I"/>
    <property type="match status" value="1"/>
</dbReference>
<dbReference type="Pfam" id="PF05188">
    <property type="entry name" value="MutS_II"/>
    <property type="match status" value="1"/>
</dbReference>
<dbReference type="Pfam" id="PF05192">
    <property type="entry name" value="MutS_III"/>
    <property type="match status" value="1"/>
</dbReference>
<dbReference type="Pfam" id="PF05190">
    <property type="entry name" value="MutS_IV"/>
    <property type="match status" value="1"/>
</dbReference>
<dbReference type="Pfam" id="PF00488">
    <property type="entry name" value="MutS_V"/>
    <property type="match status" value="1"/>
</dbReference>
<dbReference type="PIRSF" id="PIRSF037677">
    <property type="entry name" value="DNA_mis_repair_Msh6"/>
    <property type="match status" value="1"/>
</dbReference>
<dbReference type="SMART" id="SM00534">
    <property type="entry name" value="MUTSac"/>
    <property type="match status" value="1"/>
</dbReference>
<dbReference type="SMART" id="SM00533">
    <property type="entry name" value="MUTSd"/>
    <property type="match status" value="1"/>
</dbReference>
<dbReference type="SUPFAM" id="SSF55271">
    <property type="entry name" value="DNA repair protein MutS, domain I"/>
    <property type="match status" value="1"/>
</dbReference>
<dbReference type="SUPFAM" id="SSF53150">
    <property type="entry name" value="DNA repair protein MutS, domain II"/>
    <property type="match status" value="1"/>
</dbReference>
<dbReference type="SUPFAM" id="SSF48334">
    <property type="entry name" value="DNA repair protein MutS, domain III"/>
    <property type="match status" value="1"/>
</dbReference>
<dbReference type="SUPFAM" id="SSF52540">
    <property type="entry name" value="P-loop containing nucleoside triphosphate hydrolases"/>
    <property type="match status" value="1"/>
</dbReference>
<dbReference type="PROSITE" id="PS00486">
    <property type="entry name" value="DNA_MISMATCH_REPAIR_2"/>
    <property type="match status" value="1"/>
</dbReference>
<keyword id="KW-0067">ATP-binding</keyword>
<keyword id="KW-0227">DNA damage</keyword>
<keyword id="KW-0234">DNA repair</keyword>
<keyword id="KW-0238">DNA-binding</keyword>
<keyword id="KW-0547">Nucleotide-binding</keyword>
<keyword id="KW-1185">Reference proteome</keyword>
<name>MUTS_PELPD</name>
<proteinExistence type="inferred from homology"/>
<evidence type="ECO:0000255" key="1">
    <source>
        <dbReference type="HAMAP-Rule" id="MF_00096"/>
    </source>
</evidence>
<evidence type="ECO:0000256" key="2">
    <source>
        <dbReference type="SAM" id="MobiDB-lite"/>
    </source>
</evidence>
<gene>
    <name evidence="1" type="primary">mutS</name>
    <name type="ordered locus">Ppro_1064</name>
</gene>
<organism>
    <name type="scientific">Pelobacter propionicus (strain DSM 2379 / NBRC 103807 / OttBd1)</name>
    <dbReference type="NCBI Taxonomy" id="338966"/>
    <lineage>
        <taxon>Bacteria</taxon>
        <taxon>Pseudomonadati</taxon>
        <taxon>Thermodesulfobacteriota</taxon>
        <taxon>Desulfuromonadia</taxon>
        <taxon>Desulfuromonadales</taxon>
        <taxon>Desulfuromonadaceae</taxon>
        <taxon>Pelobacter</taxon>
    </lineage>
</organism>
<feature type="chain" id="PRO_0000335192" description="DNA mismatch repair protein MutS">
    <location>
        <begin position="1"/>
        <end position="870"/>
    </location>
</feature>
<feature type="region of interest" description="Disordered" evidence="2">
    <location>
        <begin position="813"/>
        <end position="834"/>
    </location>
</feature>
<feature type="binding site" evidence="1">
    <location>
        <begin position="621"/>
        <end position="628"/>
    </location>
    <ligand>
        <name>ATP</name>
        <dbReference type="ChEBI" id="CHEBI:30616"/>
    </ligand>
</feature>
<comment type="function">
    <text evidence="1">This protein is involved in the repair of mismatches in DNA. It is possible that it carries out the mismatch recognition step. This protein has a weak ATPase activity.</text>
</comment>
<comment type="similarity">
    <text evidence="1">Belongs to the DNA mismatch repair MutS family.</text>
</comment>
<sequence length="870" mass="96246">MADHTPMMRQYLEIKSGYPDAVLFFRMGDFYEMFLDDALLASRILDITLTSRNKGSGDEIPFCGVPYHSVTPYITKLIENGHKVAICEQVEDPKQTKGIVRREVVRVITPGLLIETENLSPDDNNYLLALHQGAEEQWGVAWLDLSTGEFRVTELAGPGSALAEAVCINPAEVLLADGVRLEEFPADLKEYLAQKIVSRAPAWVYERDYTSSLICDQFGAASPDVLGLEGLPSGLLAAGAALYYLRENRKSAIPHIRDIRVYQRSEHLALDPATRRNLEITASMAEGKKSGSLLGCLDRTVTAMGARRLKQWLGYPLVGLEPIRSRLDAVEELLEGATTRDELAAQMKGIADLERLNGRIGMASASGRDLRALHDSLQRIPPLRELMATMQTALLCQLTKEIDPLEDILDLVGRGIVENPPFSLREGGIIAPGYNPELDELRSISHEGKGFIARLEAQERARTGISSLKIRFNKVFGYSIEITKSNLASVPADYIRRQTLANAERYITEELKNYEEKVLGAEDRIHELEYSLFQEIRERVAGEGSRIACSASGLATLDVLISLAGVADERGYCKPLVDDSQVIDIHDGRHPVIEAMKLGERFVPNDTLLDGGESQILMITGPNMAGKSTYMRQVALITLMAQAGSFVPAASARIGIADRIFTRVGAGDNLSRGQSTFMLEMMEAAGILRNATPKSLIVMDEIGRGTSTFDGVSIAWAVAEYIHDTPTCRSRTLFATHYHELTELAATRERIRNFTVAVREWNDQVIFLRTIVPGGASHSYGIQVARLAGMPADVIERAKEILRNLENGEFEEGAPRIAKSRRQRTPDPSPQFSLFESDEDLLRTRLKKLNIATLTPLEALNLLDELKRMA</sequence>